<feature type="chain" id="PRO_0000326757" description="Acylphosphatase">
    <location>
        <begin position="1"/>
        <end position="99"/>
    </location>
</feature>
<feature type="domain" description="Acylphosphatase-like" evidence="1">
    <location>
        <begin position="5"/>
        <end position="97"/>
    </location>
</feature>
<feature type="active site" evidence="1">
    <location>
        <position position="20"/>
    </location>
</feature>
<feature type="active site" evidence="1">
    <location>
        <position position="38"/>
    </location>
</feature>
<protein>
    <recommendedName>
        <fullName>Acylphosphatase</fullName>
        <ecNumber>3.6.1.7</ecNumber>
    </recommendedName>
    <alternativeName>
        <fullName>Acylphosphate phosphohydrolase</fullName>
    </alternativeName>
</protein>
<keyword id="KW-0378">Hydrolase</keyword>
<keyword id="KW-1185">Reference proteome</keyword>
<accession>Q1QLD8</accession>
<sequence>MDDVVRQIVIRGRVQGVGFRYWTMREAIRLGVAGWVRNRRDGSVEALFAGPADAVADMVARCRNGPGAARVDAVEDQPVAANAEKMIRPGERFSQLPTV</sequence>
<comment type="catalytic activity">
    <reaction>
        <text>an acyl phosphate + H2O = a carboxylate + phosphate + H(+)</text>
        <dbReference type="Rhea" id="RHEA:14965"/>
        <dbReference type="ChEBI" id="CHEBI:15377"/>
        <dbReference type="ChEBI" id="CHEBI:15378"/>
        <dbReference type="ChEBI" id="CHEBI:29067"/>
        <dbReference type="ChEBI" id="CHEBI:43474"/>
        <dbReference type="ChEBI" id="CHEBI:59918"/>
        <dbReference type="EC" id="3.6.1.7"/>
    </reaction>
</comment>
<comment type="similarity">
    <text evidence="2">Belongs to the acylphosphatase family.</text>
</comment>
<name>ACYP_NITHX</name>
<gene>
    <name type="primary">acyP</name>
    <name type="ordered locus">Nham_2164</name>
</gene>
<proteinExistence type="inferred from homology"/>
<reference key="1">
    <citation type="submission" date="2006-03" db="EMBL/GenBank/DDBJ databases">
        <title>Complete sequence of chromosome of Nitrobacter hamburgensis X14.</title>
        <authorList>
            <consortium name="US DOE Joint Genome Institute"/>
            <person name="Copeland A."/>
            <person name="Lucas S."/>
            <person name="Lapidus A."/>
            <person name="Barry K."/>
            <person name="Detter J.C."/>
            <person name="Glavina del Rio T."/>
            <person name="Hammon N."/>
            <person name="Israni S."/>
            <person name="Dalin E."/>
            <person name="Tice H."/>
            <person name="Pitluck S."/>
            <person name="Chain P."/>
            <person name="Malfatti S."/>
            <person name="Shin M."/>
            <person name="Vergez L."/>
            <person name="Schmutz J."/>
            <person name="Larimer F."/>
            <person name="Land M."/>
            <person name="Hauser L."/>
            <person name="Kyrpides N."/>
            <person name="Ivanova N."/>
            <person name="Ward B."/>
            <person name="Arp D."/>
            <person name="Klotz M."/>
            <person name="Stein L."/>
            <person name="O'Mullan G."/>
            <person name="Starkenburg S."/>
            <person name="Sayavedra L."/>
            <person name="Poret-Peterson A.T."/>
            <person name="Gentry M.E."/>
            <person name="Bruce D."/>
            <person name="Richardson P."/>
        </authorList>
    </citation>
    <scope>NUCLEOTIDE SEQUENCE [LARGE SCALE GENOMIC DNA]</scope>
    <source>
        <strain>DSM 10229 / NCIMB 13809 / X14</strain>
    </source>
</reference>
<evidence type="ECO:0000255" key="1">
    <source>
        <dbReference type="PROSITE-ProRule" id="PRU00520"/>
    </source>
</evidence>
<evidence type="ECO:0000305" key="2"/>
<organism>
    <name type="scientific">Nitrobacter hamburgensis (strain DSM 10229 / NCIMB 13809 / X14)</name>
    <dbReference type="NCBI Taxonomy" id="323097"/>
    <lineage>
        <taxon>Bacteria</taxon>
        <taxon>Pseudomonadati</taxon>
        <taxon>Pseudomonadota</taxon>
        <taxon>Alphaproteobacteria</taxon>
        <taxon>Hyphomicrobiales</taxon>
        <taxon>Nitrobacteraceae</taxon>
        <taxon>Nitrobacter</taxon>
    </lineage>
</organism>
<dbReference type="EC" id="3.6.1.7"/>
<dbReference type="EMBL" id="CP000319">
    <property type="protein sequence ID" value="ABE62959.1"/>
    <property type="molecule type" value="Genomic_DNA"/>
</dbReference>
<dbReference type="RefSeq" id="WP_011510636.1">
    <property type="nucleotide sequence ID" value="NC_007964.1"/>
</dbReference>
<dbReference type="SMR" id="Q1QLD8"/>
<dbReference type="STRING" id="323097.Nham_2164"/>
<dbReference type="KEGG" id="nha:Nham_2164"/>
<dbReference type="eggNOG" id="COG1254">
    <property type="taxonomic scope" value="Bacteria"/>
</dbReference>
<dbReference type="HOGENOM" id="CLU_141932_3_2_5"/>
<dbReference type="OrthoDB" id="5295388at2"/>
<dbReference type="Proteomes" id="UP000001953">
    <property type="component" value="Chromosome"/>
</dbReference>
<dbReference type="GO" id="GO:0003998">
    <property type="term" value="F:acylphosphatase activity"/>
    <property type="evidence" value="ECO:0007669"/>
    <property type="project" value="UniProtKB-EC"/>
</dbReference>
<dbReference type="Gene3D" id="3.30.70.100">
    <property type="match status" value="1"/>
</dbReference>
<dbReference type="InterPro" id="IPR020456">
    <property type="entry name" value="Acylphosphatase"/>
</dbReference>
<dbReference type="InterPro" id="IPR001792">
    <property type="entry name" value="Acylphosphatase-like_dom"/>
</dbReference>
<dbReference type="InterPro" id="IPR036046">
    <property type="entry name" value="Acylphosphatase-like_dom_sf"/>
</dbReference>
<dbReference type="InterPro" id="IPR017968">
    <property type="entry name" value="Acylphosphatase_CS"/>
</dbReference>
<dbReference type="NCBIfam" id="NF010996">
    <property type="entry name" value="PRK14421.1"/>
    <property type="match status" value="1"/>
</dbReference>
<dbReference type="PANTHER" id="PTHR47268">
    <property type="entry name" value="ACYLPHOSPHATASE"/>
    <property type="match status" value="1"/>
</dbReference>
<dbReference type="PANTHER" id="PTHR47268:SF4">
    <property type="entry name" value="ACYLPHOSPHATASE"/>
    <property type="match status" value="1"/>
</dbReference>
<dbReference type="Pfam" id="PF00708">
    <property type="entry name" value="Acylphosphatase"/>
    <property type="match status" value="1"/>
</dbReference>
<dbReference type="PRINTS" id="PR00112">
    <property type="entry name" value="ACYLPHPHTASE"/>
</dbReference>
<dbReference type="SUPFAM" id="SSF54975">
    <property type="entry name" value="Acylphosphatase/BLUF domain-like"/>
    <property type="match status" value="1"/>
</dbReference>
<dbReference type="PROSITE" id="PS00150">
    <property type="entry name" value="ACYLPHOSPHATASE_1"/>
    <property type="match status" value="1"/>
</dbReference>
<dbReference type="PROSITE" id="PS00151">
    <property type="entry name" value="ACYLPHOSPHATASE_2"/>
    <property type="match status" value="1"/>
</dbReference>
<dbReference type="PROSITE" id="PS51160">
    <property type="entry name" value="ACYLPHOSPHATASE_3"/>
    <property type="match status" value="1"/>
</dbReference>